<feature type="signal peptide" evidence="1">
    <location>
        <begin position="1"/>
        <end position="27"/>
    </location>
</feature>
<feature type="chain" id="PRO_0000421241" description="Egg cell-secreted protein 1.1">
    <location>
        <begin position="28"/>
        <end position="158"/>
    </location>
</feature>
<feature type="glycosylation site" description="N-linked (GlcNAc...) asparagine" evidence="1">
    <location>
        <position position="122"/>
    </location>
</feature>
<accession>Q9SRD8</accession>
<protein>
    <recommendedName>
        <fullName>Egg cell-secreted protein 1.1</fullName>
    </recommendedName>
</protein>
<sequence length="158" mass="16998">MASKSSFMATFNIVTLMLMVASSTVTARPLMKPSMGTSSPTTSLVYRLKLDEDTGYCWDSLMQLQHCSGELILFFLNGETYIGPGCCSAIRTIGRKCWPTMIGVLGFTAQEGDMLQGYCDGNDSDNNGEDHALASSTLPLSVNFKTTVVRSSASPSNP</sequence>
<name>EC11_ARATH</name>
<gene>
    <name type="primary">EC1.1</name>
    <name type="ordered locus">At1g76750</name>
    <name type="ORF">F28O16.12</name>
</gene>
<reference key="1">
    <citation type="journal article" date="2000" name="Nature">
        <title>Sequence and analysis of chromosome 1 of the plant Arabidopsis thaliana.</title>
        <authorList>
            <person name="Theologis A."/>
            <person name="Ecker J.R."/>
            <person name="Palm C.J."/>
            <person name="Federspiel N.A."/>
            <person name="Kaul S."/>
            <person name="White O."/>
            <person name="Alonso J."/>
            <person name="Altafi H."/>
            <person name="Araujo R."/>
            <person name="Bowman C.L."/>
            <person name="Brooks S.Y."/>
            <person name="Buehler E."/>
            <person name="Chan A."/>
            <person name="Chao Q."/>
            <person name="Chen H."/>
            <person name="Cheuk R.F."/>
            <person name="Chin C.W."/>
            <person name="Chung M.K."/>
            <person name="Conn L."/>
            <person name="Conway A.B."/>
            <person name="Conway A.R."/>
            <person name="Creasy T.H."/>
            <person name="Dewar K."/>
            <person name="Dunn P."/>
            <person name="Etgu P."/>
            <person name="Feldblyum T.V."/>
            <person name="Feng J.-D."/>
            <person name="Fong B."/>
            <person name="Fujii C.Y."/>
            <person name="Gill J.E."/>
            <person name="Goldsmith A.D."/>
            <person name="Haas B."/>
            <person name="Hansen N.F."/>
            <person name="Hughes B."/>
            <person name="Huizar L."/>
            <person name="Hunter J.L."/>
            <person name="Jenkins J."/>
            <person name="Johnson-Hopson C."/>
            <person name="Khan S."/>
            <person name="Khaykin E."/>
            <person name="Kim C.J."/>
            <person name="Koo H.L."/>
            <person name="Kremenetskaia I."/>
            <person name="Kurtz D.B."/>
            <person name="Kwan A."/>
            <person name="Lam B."/>
            <person name="Langin-Hooper S."/>
            <person name="Lee A."/>
            <person name="Lee J.M."/>
            <person name="Lenz C.A."/>
            <person name="Li J.H."/>
            <person name="Li Y.-P."/>
            <person name="Lin X."/>
            <person name="Liu S.X."/>
            <person name="Liu Z.A."/>
            <person name="Luros J.S."/>
            <person name="Maiti R."/>
            <person name="Marziali A."/>
            <person name="Militscher J."/>
            <person name="Miranda M."/>
            <person name="Nguyen M."/>
            <person name="Nierman W.C."/>
            <person name="Osborne B.I."/>
            <person name="Pai G."/>
            <person name="Peterson J."/>
            <person name="Pham P.K."/>
            <person name="Rizzo M."/>
            <person name="Rooney T."/>
            <person name="Rowley D."/>
            <person name="Sakano H."/>
            <person name="Salzberg S.L."/>
            <person name="Schwartz J.R."/>
            <person name="Shinn P."/>
            <person name="Southwick A.M."/>
            <person name="Sun H."/>
            <person name="Tallon L.J."/>
            <person name="Tambunga G."/>
            <person name="Toriumi M.J."/>
            <person name="Town C.D."/>
            <person name="Utterback T."/>
            <person name="Van Aken S."/>
            <person name="Vaysberg M."/>
            <person name="Vysotskaia V.S."/>
            <person name="Walker M."/>
            <person name="Wu D."/>
            <person name="Yu G."/>
            <person name="Fraser C.M."/>
            <person name="Venter J.C."/>
            <person name="Davis R.W."/>
        </authorList>
    </citation>
    <scope>NUCLEOTIDE SEQUENCE [LARGE SCALE GENOMIC DNA]</scope>
    <source>
        <strain>cv. Columbia</strain>
    </source>
</reference>
<reference key="2">
    <citation type="journal article" date="2017" name="Plant J.">
        <title>Araport11: a complete reannotation of the Arabidopsis thaliana reference genome.</title>
        <authorList>
            <person name="Cheng C.Y."/>
            <person name="Krishnakumar V."/>
            <person name="Chan A.P."/>
            <person name="Thibaud-Nissen F."/>
            <person name="Schobel S."/>
            <person name="Town C.D."/>
        </authorList>
    </citation>
    <scope>GENOME REANNOTATION</scope>
    <source>
        <strain>cv. Columbia</strain>
    </source>
</reference>
<reference key="3">
    <citation type="submission" date="2004-08" db="EMBL/GenBank/DDBJ databases">
        <title>Reconstruction of cDNA sequences for hypothetical genes in Arabidopsis thaliana from 5' and 3' RACE products.</title>
        <authorList>
            <person name="Xiao Y.-L."/>
            <person name="Underwood B.A."/>
            <person name="Moskal W.A. Jr."/>
            <person name="Wang W."/>
            <person name="Redman J.C."/>
            <person name="Wu H.C."/>
            <person name="Utterback T."/>
            <person name="Town C.D."/>
        </authorList>
    </citation>
    <scope>NUCLEOTIDE SEQUENCE [LARGE SCALE MRNA]</scope>
    <source>
        <strain>cv. Columbia</strain>
    </source>
</reference>
<reference key="4">
    <citation type="submission" date="2004-10" db="EMBL/GenBank/DDBJ databases">
        <authorList>
            <person name="Underwood B.A."/>
            <person name="Xiao Y.-L."/>
            <person name="Moskal W.A. Jr."/>
            <person name="Monaghan E.L."/>
            <person name="Wang W."/>
            <person name="Redman J.C."/>
            <person name="Wu H.C."/>
            <person name="Utterback T."/>
            <person name="Town C.D."/>
        </authorList>
    </citation>
    <scope>NUCLEOTIDE SEQUENCE [LARGE SCALE GENOMIC DNA]</scope>
    <source>
        <strain>cv. Columbia</strain>
    </source>
</reference>
<reference key="5">
    <citation type="journal article" date="2012" name="Science">
        <title>Egg cell-secreted EC1 triggers sperm cell activation during double fertilization.</title>
        <authorList>
            <person name="Sprunck S."/>
            <person name="Rademacher S."/>
            <person name="Vogler F."/>
            <person name="Gheyselinck J."/>
            <person name="Grossniklaus U."/>
            <person name="Dresselhaus T."/>
        </authorList>
    </citation>
    <scope>FUNCTION</scope>
    <scope>TISSUE SPECIFICITY</scope>
    <scope>DEVELOPMENTAL STAGE</scope>
    <scope>SUBCELLULAR LOCATION</scope>
</reference>
<keyword id="KW-0968">Cytoplasmic vesicle</keyword>
<keyword id="KW-0278">Fertilization</keyword>
<keyword id="KW-0325">Glycoprotein</keyword>
<keyword id="KW-1185">Reference proteome</keyword>
<keyword id="KW-0964">Secreted</keyword>
<keyword id="KW-0732">Signal</keyword>
<organism>
    <name type="scientific">Arabidopsis thaliana</name>
    <name type="common">Mouse-ear cress</name>
    <dbReference type="NCBI Taxonomy" id="3702"/>
    <lineage>
        <taxon>Eukaryota</taxon>
        <taxon>Viridiplantae</taxon>
        <taxon>Streptophyta</taxon>
        <taxon>Embryophyta</taxon>
        <taxon>Tracheophyta</taxon>
        <taxon>Spermatophyta</taxon>
        <taxon>Magnoliopsida</taxon>
        <taxon>eudicotyledons</taxon>
        <taxon>Gunneridae</taxon>
        <taxon>Pentapetalae</taxon>
        <taxon>rosids</taxon>
        <taxon>malvids</taxon>
        <taxon>Brassicales</taxon>
        <taxon>Brassicaceae</taxon>
        <taxon>Camelineae</taxon>
        <taxon>Arabidopsis</taxon>
    </lineage>
</organism>
<evidence type="ECO:0000255" key="1"/>
<evidence type="ECO:0000269" key="2">
    <source>
    </source>
</evidence>
<evidence type="ECO:0000305" key="3"/>
<proteinExistence type="evidence at transcript level"/>
<dbReference type="EMBL" id="AC010718">
    <property type="protein sequence ID" value="AAF04438.1"/>
    <property type="molecule type" value="Genomic_DNA"/>
</dbReference>
<dbReference type="EMBL" id="CP002684">
    <property type="protein sequence ID" value="AEE35885.1"/>
    <property type="molecule type" value="Genomic_DNA"/>
</dbReference>
<dbReference type="EMBL" id="AY735569">
    <property type="protein sequence ID" value="AAU44439.1"/>
    <property type="molecule type" value="mRNA"/>
</dbReference>
<dbReference type="EMBL" id="AY773832">
    <property type="protein sequence ID" value="AAV63861.1"/>
    <property type="molecule type" value="Genomic_DNA"/>
</dbReference>
<dbReference type="PIR" id="A96796">
    <property type="entry name" value="A96796"/>
</dbReference>
<dbReference type="RefSeq" id="NP_177801.1">
    <property type="nucleotide sequence ID" value="NM_106325.2"/>
</dbReference>
<dbReference type="STRING" id="3702.Q9SRD8"/>
<dbReference type="GlyCosmos" id="Q9SRD8">
    <property type="glycosylation" value="1 site, No reported glycans"/>
</dbReference>
<dbReference type="GlyGen" id="Q9SRD8">
    <property type="glycosylation" value="1 site"/>
</dbReference>
<dbReference type="PaxDb" id="3702-AT1G76750.1"/>
<dbReference type="DNASU" id="844009"/>
<dbReference type="EnsemblPlants" id="AT1G76750.1">
    <property type="protein sequence ID" value="AT1G76750.1"/>
    <property type="gene ID" value="AT1G76750"/>
</dbReference>
<dbReference type="GeneID" id="844009"/>
<dbReference type="Gramene" id="AT1G76750.1">
    <property type="protein sequence ID" value="AT1G76750.1"/>
    <property type="gene ID" value="AT1G76750"/>
</dbReference>
<dbReference type="KEGG" id="ath:AT1G76750"/>
<dbReference type="Araport" id="AT1G76750"/>
<dbReference type="TAIR" id="AT1G76750">
    <property type="gene designation" value="EC1.1"/>
</dbReference>
<dbReference type="eggNOG" id="ENOG502S3PF">
    <property type="taxonomic scope" value="Eukaryota"/>
</dbReference>
<dbReference type="HOGENOM" id="CLU_128969_2_0_1"/>
<dbReference type="InParanoid" id="Q9SRD8"/>
<dbReference type="OMA" id="NCWESLW"/>
<dbReference type="OrthoDB" id="776947at2759"/>
<dbReference type="PhylomeDB" id="Q9SRD8"/>
<dbReference type="PRO" id="PR:Q9SRD8"/>
<dbReference type="Proteomes" id="UP000006548">
    <property type="component" value="Chromosome 1"/>
</dbReference>
<dbReference type="ExpressionAtlas" id="Q9SRD8">
    <property type="expression patterns" value="baseline and differential"/>
</dbReference>
<dbReference type="GO" id="GO:0031410">
    <property type="term" value="C:cytoplasmic vesicle"/>
    <property type="evidence" value="ECO:0007669"/>
    <property type="project" value="UniProtKB-KW"/>
</dbReference>
<dbReference type="GO" id="GO:0005576">
    <property type="term" value="C:extracellular region"/>
    <property type="evidence" value="ECO:0000314"/>
    <property type="project" value="UniProtKB"/>
</dbReference>
<dbReference type="GO" id="GO:0031982">
    <property type="term" value="C:vesicle"/>
    <property type="evidence" value="ECO:0000314"/>
    <property type="project" value="UniProtKB"/>
</dbReference>
<dbReference type="GO" id="GO:0009567">
    <property type="term" value="P:double fertilization forming a zygote and endosperm"/>
    <property type="evidence" value="ECO:0000316"/>
    <property type="project" value="TAIR"/>
</dbReference>
<dbReference type="GO" id="GO:0080155">
    <property type="term" value="P:regulation of double fertilization forming a zygote and endosperm"/>
    <property type="evidence" value="ECO:0000315"/>
    <property type="project" value="UniProtKB"/>
</dbReference>
<dbReference type="GO" id="GO:2000008">
    <property type="term" value="P:regulation of protein localization to cell surface"/>
    <property type="evidence" value="ECO:0000315"/>
    <property type="project" value="UniProtKB"/>
</dbReference>
<dbReference type="GO" id="GO:0048240">
    <property type="term" value="P:sperm capacitation"/>
    <property type="evidence" value="ECO:0000314"/>
    <property type="project" value="TAIR"/>
</dbReference>
<dbReference type="InterPro" id="IPR044711">
    <property type="entry name" value="EC11-15"/>
</dbReference>
<dbReference type="InterPro" id="IPR008502">
    <property type="entry name" value="Prolamin-like"/>
</dbReference>
<dbReference type="PANTHER" id="PTHR35293">
    <property type="entry name" value="EGG CELL-SECRETED PROTEIN 1.5"/>
    <property type="match status" value="1"/>
</dbReference>
<dbReference type="PANTHER" id="PTHR35293:SF1">
    <property type="entry name" value="EGG CELL-SECRETED PROTEIN 1.5"/>
    <property type="match status" value="1"/>
</dbReference>
<dbReference type="Pfam" id="PF05617">
    <property type="entry name" value="Prolamin_like"/>
    <property type="match status" value="1"/>
</dbReference>
<comment type="function">
    <text evidence="2">Involved in the regulation of gamete interactions during the double fertilization and to prevent multiple-pollen tube attraction; mediates the redistribution of the gamete fusogen HAP2/GCS1 to the cell surface after secretion upon sperm arrival.</text>
</comment>
<comment type="subcellular location">
    <subcellularLocation>
        <location evidence="2">Cytoplasmic vesicle</location>
    </subcellularLocation>
    <subcellularLocation>
        <location evidence="2">Secreted</location>
    </subcellularLocation>
    <text>Secreted via vesicle exocytose upon sperm arrival, especially in the apical region of the degenerating synergid cell.</text>
</comment>
<comment type="tissue specificity">
    <text evidence="2">Restricted to female reproductive tissues, specifically accumulating in storage vesicles of the unfertilized egg cell.</text>
</comment>
<comment type="developmental stage">
    <text evidence="2">Confined to the egg cell before fertilization, but disappears upon gamete fusion. Also present in zygotes and early embryos.</text>
</comment>
<comment type="similarity">
    <text evidence="3">Belongs to the plant egg cell-secreted peptide family.</text>
</comment>